<dbReference type="EMBL" id="KC145148">
    <property type="protein sequence ID" value="AGO59048.1"/>
    <property type="status" value="ALT_SEQ"/>
    <property type="molecule type" value="Genomic_DNA"/>
</dbReference>
<dbReference type="EMBL" id="KI912116">
    <property type="protein sequence ID" value="ETS76964.1"/>
    <property type="molecule type" value="Genomic_DNA"/>
</dbReference>
<dbReference type="RefSeq" id="XP_007837610.1">
    <property type="nucleotide sequence ID" value="XM_007839419.1"/>
</dbReference>
<dbReference type="GeneID" id="19275851"/>
<dbReference type="KEGG" id="pfy:PFICI_10838"/>
<dbReference type="eggNOG" id="ENOG502SNKF">
    <property type="taxonomic scope" value="Eukaryota"/>
</dbReference>
<dbReference type="InParanoid" id="A0A067XMT7"/>
<dbReference type="OMA" id="RSKQGCW"/>
<dbReference type="OrthoDB" id="5213892at2759"/>
<dbReference type="Proteomes" id="UP000030651">
    <property type="component" value="Unassembled WGS sequence"/>
</dbReference>
<dbReference type="GO" id="GO:0005634">
    <property type="term" value="C:nucleus"/>
    <property type="evidence" value="ECO:0007669"/>
    <property type="project" value="UniProtKB-SubCell"/>
</dbReference>
<dbReference type="GO" id="GO:0000981">
    <property type="term" value="F:DNA-binding transcription factor activity, RNA polymerase II-specific"/>
    <property type="evidence" value="ECO:0007669"/>
    <property type="project" value="InterPro"/>
</dbReference>
<dbReference type="GO" id="GO:0000976">
    <property type="term" value="F:transcription cis-regulatory region binding"/>
    <property type="evidence" value="ECO:0007669"/>
    <property type="project" value="TreeGrafter"/>
</dbReference>
<dbReference type="GO" id="GO:0008270">
    <property type="term" value="F:zinc ion binding"/>
    <property type="evidence" value="ECO:0007669"/>
    <property type="project" value="InterPro"/>
</dbReference>
<dbReference type="GO" id="GO:0045944">
    <property type="term" value="P:positive regulation of transcription by RNA polymerase II"/>
    <property type="evidence" value="ECO:0007669"/>
    <property type="project" value="TreeGrafter"/>
</dbReference>
<dbReference type="CDD" id="cd00067">
    <property type="entry name" value="GAL4"/>
    <property type="match status" value="1"/>
</dbReference>
<dbReference type="Gene3D" id="4.10.240.10">
    <property type="entry name" value="Zn(2)-C6 fungal-type DNA-binding domain"/>
    <property type="match status" value="1"/>
</dbReference>
<dbReference type="InterPro" id="IPR021858">
    <property type="entry name" value="Fun_TF"/>
</dbReference>
<dbReference type="InterPro" id="IPR036864">
    <property type="entry name" value="Zn2-C6_fun-type_DNA-bd_sf"/>
</dbReference>
<dbReference type="InterPro" id="IPR001138">
    <property type="entry name" value="Zn2Cys6_DnaBD"/>
</dbReference>
<dbReference type="PANTHER" id="PTHR37534:SF26">
    <property type="entry name" value="TRANSCRIPTION FACTOR, PUTATIVE-RELATED"/>
    <property type="match status" value="1"/>
</dbReference>
<dbReference type="PANTHER" id="PTHR37534">
    <property type="entry name" value="TRANSCRIPTIONAL ACTIVATOR PROTEIN UGA3"/>
    <property type="match status" value="1"/>
</dbReference>
<dbReference type="Pfam" id="PF11951">
    <property type="entry name" value="Fungal_trans_2"/>
    <property type="match status" value="1"/>
</dbReference>
<dbReference type="Pfam" id="PF00172">
    <property type="entry name" value="Zn_clus"/>
    <property type="match status" value="1"/>
</dbReference>
<dbReference type="SMART" id="SM00066">
    <property type="entry name" value="GAL4"/>
    <property type="match status" value="1"/>
</dbReference>
<dbReference type="SUPFAM" id="SSF57701">
    <property type="entry name" value="Zn2/Cys6 DNA-binding domain"/>
    <property type="match status" value="1"/>
</dbReference>
<dbReference type="PROSITE" id="PS00463">
    <property type="entry name" value="ZN2_CY6_FUNGAL_1"/>
    <property type="match status" value="1"/>
</dbReference>
<dbReference type="PROSITE" id="PS50048">
    <property type="entry name" value="ZN2_CY6_FUNGAL_2"/>
    <property type="match status" value="1"/>
</dbReference>
<name>PTAR3_PESFW</name>
<organism>
    <name type="scientific">Pestalotiopsis fici (strain W106-1 / CGMCC3.15140)</name>
    <dbReference type="NCBI Taxonomy" id="1229662"/>
    <lineage>
        <taxon>Eukaryota</taxon>
        <taxon>Fungi</taxon>
        <taxon>Dikarya</taxon>
        <taxon>Ascomycota</taxon>
        <taxon>Pezizomycotina</taxon>
        <taxon>Sordariomycetes</taxon>
        <taxon>Xylariomycetidae</taxon>
        <taxon>Amphisphaeriales</taxon>
        <taxon>Sporocadaceae</taxon>
        <taxon>Pestalotiopsis</taxon>
    </lineage>
</organism>
<proteinExistence type="inferred from homology"/>
<feature type="chain" id="PRO_0000443044" description="Pestheic acid cluster transcriptional regulator 3">
    <location>
        <begin position="1"/>
        <end position="564"/>
    </location>
</feature>
<feature type="DNA-binding region" description="Zn(2)-C6 fungal-type" evidence="1">
    <location>
        <begin position="11"/>
        <end position="38"/>
    </location>
</feature>
<feature type="region of interest" description="Disordered" evidence="2">
    <location>
        <begin position="71"/>
        <end position="123"/>
    </location>
</feature>
<feature type="compositionally biased region" description="Polar residues" evidence="2">
    <location>
        <begin position="97"/>
        <end position="113"/>
    </location>
</feature>
<reference key="1">
    <citation type="journal article" date="2014" name="ChemBioChem">
        <title>Identification of the first diphenyl ether gene cluster for pestheic acid biosynthesis in plant endophyte Pestalotiopsis fici.</title>
        <authorList>
            <person name="Xu X."/>
            <person name="Liu L."/>
            <person name="Zhang F."/>
            <person name="Wang W."/>
            <person name="Li J."/>
            <person name="Guo L."/>
            <person name="Che Y."/>
            <person name="Liu G."/>
        </authorList>
    </citation>
    <scope>NUCLEOTIDE SEQUENCE [GENOMIC DNA]</scope>
    <scope>FUNCTION</scope>
    <source>
        <strain>W106-1 / CGMCC3.15140</strain>
    </source>
</reference>
<reference key="2">
    <citation type="journal article" date="2015" name="BMC Genomics">
        <title>Genomic and transcriptomic analysis of the endophytic fungus Pestalotiopsis fici reveals its lifestyle and high potential for synthesis of natural products.</title>
        <authorList>
            <person name="Wang X."/>
            <person name="Zhang X."/>
            <person name="Liu L."/>
            <person name="Xiang M."/>
            <person name="Wang W."/>
            <person name="Sun X."/>
            <person name="Che Y."/>
            <person name="Guo L."/>
            <person name="Liu G."/>
            <person name="Guo L."/>
            <person name="Wang C."/>
            <person name="Yin W.B."/>
            <person name="Stadler M."/>
            <person name="Zhang X."/>
            <person name="Liu X."/>
        </authorList>
    </citation>
    <scope>NUCLEOTIDE SEQUENCE [LARGE SCALE GENOMIC DNA]</scope>
    <source>
        <strain>W106-1 / CGMCC3.15140</strain>
    </source>
</reference>
<protein>
    <recommendedName>
        <fullName evidence="3">Pestheic acid cluster transcriptional regulator 3</fullName>
    </recommendedName>
</protein>
<keyword id="KW-0238">DNA-binding</keyword>
<keyword id="KW-0479">Metal-binding</keyword>
<keyword id="KW-0539">Nucleus</keyword>
<keyword id="KW-1185">Reference proteome</keyword>
<keyword id="KW-0804">Transcription</keyword>
<keyword id="KW-0805">Transcription regulation</keyword>
<keyword id="KW-0862">Zinc</keyword>
<comment type="function">
    <text evidence="5">Transcription factor that, with ptaR1 and ptaR2, coregulates the expression of the gene cluster that mediates the biosynthesis of pestheic acid, a diphenyl ether which is a biosynthetic precursor of the unique chloropupukeananes (PubMed:24302702).</text>
</comment>
<comment type="subcellular location">
    <subcellularLocation>
        <location evidence="1">Nucleus</location>
    </subcellularLocation>
</comment>
<comment type="sequence caution" evidence="4">
    <conflict type="erroneous gene model prediction">
        <sequence resource="EMBL-CDS" id="AGO59048"/>
    </conflict>
</comment>
<sequence>MSNPVRSKGGCWTCRLRRKKCDEGKPECTTCQALSITCYGYGPKPEWMDNGDAEKDVANSLKHIVRYTSRRTSSRYRVPPGQKANPKLAPKVHAAASTPSTNTSHSTETTPPSDNGFYDTAESPLSPNGAQHLTIATIPAEDSILLMHFLDKVFPLQYPMYRPDILEGGRGWLLALLLQTKSLYHAALALSSYHRRMLVFERISEQCRATAAVQQEKHLETCLNEVRQAMVILDQRTRQRKSYDGMGTVTSIVQLVFFELFAGQDHAWRTHLNAAIDVYDQNCRDKLEHLDLSEASKTILRNDQRLAVDGALVTQEVTTFRFMGGSIIWLDILSSLAAGSVPRLLSYHQGVLDAASQVKLENIMGCKNWLMCQIGRIAALQGHRRQDGWTSQRHGIKLHSIAADIKSEIESGMAREALESLNIQTSDSCGINNSSTNSVTLTTRMFAFMAIIHLHLVTHDFERLDNLRETIADAIRLLQSQVPCSMIPVIVAPLFIIGCVAAQGDEQSLFRASLASDTSQHRLYRHRKDVLSALEEIWSKRQTSTDYTWNDVLDMGQHKYLLFL</sequence>
<gene>
    <name evidence="3" type="primary">ptaR3</name>
    <name type="ORF">PFICI_10838</name>
</gene>
<evidence type="ECO:0000255" key="1">
    <source>
        <dbReference type="PROSITE-ProRule" id="PRU00227"/>
    </source>
</evidence>
<evidence type="ECO:0000256" key="2">
    <source>
        <dbReference type="SAM" id="MobiDB-lite"/>
    </source>
</evidence>
<evidence type="ECO:0000303" key="3">
    <source>
    </source>
</evidence>
<evidence type="ECO:0000305" key="4"/>
<evidence type="ECO:0000305" key="5">
    <source>
    </source>
</evidence>
<accession>A0A067XMT7</accession>
<accession>W3WT17</accession>